<organism>
    <name type="scientific">Methanothermobacter thermautotrophicus (strain ATCC 29096 / DSM 1053 / JCM 10044 / NBRC 100330 / Delta H)</name>
    <name type="common">Methanobacterium thermoautotrophicum</name>
    <dbReference type="NCBI Taxonomy" id="187420"/>
    <lineage>
        <taxon>Archaea</taxon>
        <taxon>Methanobacteriati</taxon>
        <taxon>Methanobacteriota</taxon>
        <taxon>Methanomada group</taxon>
        <taxon>Methanobacteria</taxon>
        <taxon>Methanobacteriales</taxon>
        <taxon>Methanobacteriaceae</taxon>
        <taxon>Methanothermobacter</taxon>
    </lineage>
</organism>
<evidence type="ECO:0000250" key="1"/>
<evidence type="ECO:0000255" key="2">
    <source>
        <dbReference type="HAMAP-Rule" id="MF_01163"/>
    </source>
</evidence>
<evidence type="ECO:0000305" key="3"/>
<accession>O27269</accession>
<dbReference type="EC" id="6.3.4.23" evidence="2"/>
<dbReference type="EMBL" id="AE000666">
    <property type="protein sequence ID" value="AAB85690.1"/>
    <property type="status" value="ALT_INIT"/>
    <property type="molecule type" value="Genomic_DNA"/>
</dbReference>
<dbReference type="PIR" id="D69027">
    <property type="entry name" value="D69027"/>
</dbReference>
<dbReference type="RefSeq" id="WP_048060989.1">
    <property type="nucleotide sequence ID" value="NC_000916.1"/>
</dbReference>
<dbReference type="SMR" id="O27269"/>
<dbReference type="STRING" id="187420.MTH_1201"/>
<dbReference type="PaxDb" id="187420-MTH_1201"/>
<dbReference type="EnsemblBacteria" id="AAB85690">
    <property type="protein sequence ID" value="AAB85690"/>
    <property type="gene ID" value="MTH_1201"/>
</dbReference>
<dbReference type="GeneID" id="1471609"/>
<dbReference type="KEGG" id="mth:MTH_1201"/>
<dbReference type="PATRIC" id="fig|187420.15.peg.1179"/>
<dbReference type="HOGENOM" id="CLU_065084_0_0_2"/>
<dbReference type="InParanoid" id="O27269"/>
<dbReference type="UniPathway" id="UPA00074">
    <property type="reaction ID" value="UER00134"/>
</dbReference>
<dbReference type="Proteomes" id="UP000005223">
    <property type="component" value="Chromosome"/>
</dbReference>
<dbReference type="GO" id="GO:0005524">
    <property type="term" value="F:ATP binding"/>
    <property type="evidence" value="ECO:0007669"/>
    <property type="project" value="UniProtKB-KW"/>
</dbReference>
<dbReference type="GO" id="GO:0016879">
    <property type="term" value="F:ligase activity, forming carbon-nitrogen bonds"/>
    <property type="evidence" value="ECO:0007669"/>
    <property type="project" value="UniProtKB-UniRule"/>
</dbReference>
<dbReference type="GO" id="GO:0000287">
    <property type="term" value="F:magnesium ion binding"/>
    <property type="evidence" value="ECO:0007669"/>
    <property type="project" value="InterPro"/>
</dbReference>
<dbReference type="GO" id="GO:0006189">
    <property type="term" value="P:'de novo' IMP biosynthetic process"/>
    <property type="evidence" value="ECO:0007669"/>
    <property type="project" value="UniProtKB-UniRule"/>
</dbReference>
<dbReference type="Gene3D" id="3.40.50.20">
    <property type="match status" value="1"/>
</dbReference>
<dbReference type="Gene3D" id="3.30.1490.20">
    <property type="entry name" value="ATP-grasp fold, A domain"/>
    <property type="match status" value="1"/>
</dbReference>
<dbReference type="Gene3D" id="3.30.470.20">
    <property type="entry name" value="ATP-grasp fold, B domain"/>
    <property type="match status" value="1"/>
</dbReference>
<dbReference type="HAMAP" id="MF_01163">
    <property type="entry name" value="IMP_biosynth_PurP"/>
    <property type="match status" value="1"/>
</dbReference>
<dbReference type="InterPro" id="IPR011761">
    <property type="entry name" value="ATP-grasp"/>
</dbReference>
<dbReference type="InterPro" id="IPR013815">
    <property type="entry name" value="ATP_grasp_subdomain_1"/>
</dbReference>
<dbReference type="InterPro" id="IPR023656">
    <property type="entry name" value="IMP_biosynth_PurP"/>
</dbReference>
<dbReference type="InterPro" id="IPR009720">
    <property type="entry name" value="IMP_biosynth_PurP_C"/>
</dbReference>
<dbReference type="InterPro" id="IPR010672">
    <property type="entry name" value="IMP_biosynth_PurP_N"/>
</dbReference>
<dbReference type="InterPro" id="IPR016185">
    <property type="entry name" value="PreATP-grasp_dom_sf"/>
</dbReference>
<dbReference type="NCBIfam" id="NF009780">
    <property type="entry name" value="PRK13278.1-5"/>
    <property type="match status" value="1"/>
</dbReference>
<dbReference type="PANTHER" id="PTHR38147:SF2">
    <property type="entry name" value="5-FORMAMINOIMIDAZOLE-4-CARBOXAMIDE-1-(BETA)-D-RIBOFURANOSYL 5'-MONOPHOSPHATE SYNTHETASE"/>
    <property type="match status" value="1"/>
</dbReference>
<dbReference type="PANTHER" id="PTHR38147">
    <property type="entry name" value="5-FORMAMINOIMIDAZOLE-4-CARBOXAMIDE-1-(BETA)-D-RIBOFURANOSYL 5'-MONOPHOSPHATE SYNTHETASE-RELATED"/>
    <property type="match status" value="1"/>
</dbReference>
<dbReference type="Pfam" id="PF06849">
    <property type="entry name" value="DUF1246"/>
    <property type="match status" value="1"/>
</dbReference>
<dbReference type="Pfam" id="PF06973">
    <property type="entry name" value="DUF1297"/>
    <property type="match status" value="1"/>
</dbReference>
<dbReference type="PIRSF" id="PIRSF004602">
    <property type="entry name" value="ATPgrasp_PurP"/>
    <property type="match status" value="1"/>
</dbReference>
<dbReference type="SUPFAM" id="SSF56059">
    <property type="entry name" value="Glutathione synthetase ATP-binding domain-like"/>
    <property type="match status" value="1"/>
</dbReference>
<dbReference type="SUPFAM" id="SSF52440">
    <property type="entry name" value="PreATP-grasp domain"/>
    <property type="match status" value="1"/>
</dbReference>
<dbReference type="PROSITE" id="PS50975">
    <property type="entry name" value="ATP_GRASP"/>
    <property type="match status" value="1"/>
</dbReference>
<gene>
    <name evidence="2" type="primary">purP</name>
    <name type="ordered locus">MTH_1201</name>
</gene>
<name>PURP_METTH</name>
<keyword id="KW-0067">ATP-binding</keyword>
<keyword id="KW-0436">Ligase</keyword>
<keyword id="KW-0460">Magnesium</keyword>
<keyword id="KW-0464">Manganese</keyword>
<keyword id="KW-0479">Metal-binding</keyword>
<keyword id="KW-0547">Nucleotide-binding</keyword>
<keyword id="KW-0658">Purine biosynthesis</keyword>
<keyword id="KW-1185">Reference proteome</keyword>
<feature type="chain" id="PRO_0000148027" description="5-formaminoimidazole-4-carboxamide-1-(beta)-D-ribofuranosyl 5'-monophosphate synthetase">
    <location>
        <begin position="1"/>
        <end position="363"/>
    </location>
</feature>
<feature type="domain" description="ATP-grasp" evidence="2">
    <location>
        <begin position="118"/>
        <end position="350"/>
    </location>
</feature>
<feature type="binding site" evidence="2">
    <location>
        <position position="29"/>
    </location>
    <ligand>
        <name>5-amino-1-(5-phospho-beta-D-ribosyl)imidazole-4-carboxamide</name>
        <dbReference type="ChEBI" id="CHEBI:58475"/>
    </ligand>
</feature>
<feature type="binding site" evidence="2">
    <location>
        <position position="96"/>
    </location>
    <ligand>
        <name>5-amino-1-(5-phospho-beta-D-ribosyl)imidazole-4-carboxamide</name>
        <dbReference type="ChEBI" id="CHEBI:58475"/>
    </ligand>
</feature>
<feature type="binding site" evidence="2">
    <location>
        <begin position="148"/>
        <end position="210"/>
    </location>
    <ligand>
        <name>ATP</name>
        <dbReference type="ChEBI" id="CHEBI:30616"/>
    </ligand>
</feature>
<feature type="binding site" evidence="2">
    <location>
        <position position="232"/>
    </location>
    <ligand>
        <name>ATP</name>
        <dbReference type="ChEBI" id="CHEBI:30616"/>
    </ligand>
</feature>
<feature type="binding site" evidence="2">
    <location>
        <position position="260"/>
    </location>
    <ligand>
        <name>5-amino-1-(5-phospho-beta-D-ribosyl)imidazole-4-carboxamide</name>
        <dbReference type="ChEBI" id="CHEBI:58475"/>
    </ligand>
</feature>
<feature type="binding site" evidence="2">
    <location>
        <position position="299"/>
    </location>
    <ligand>
        <name>Mg(2+)</name>
        <dbReference type="ChEBI" id="CHEBI:18420"/>
    </ligand>
</feature>
<feature type="binding site" evidence="2">
    <location>
        <position position="312"/>
    </location>
    <ligand>
        <name>Mg(2+)</name>
        <dbReference type="ChEBI" id="CHEBI:18420"/>
    </ligand>
</feature>
<comment type="function">
    <text evidence="2">Catalyzes the ATP- and formate-dependent formylation of 5-aminoimidazole-4-carboxamide-1-beta-d-ribofuranosyl 5'-monophosphate (AICAR) to 5-formaminoimidazole-4-carboxamide-1-beta-d-ribofuranosyl 5'-monophosphate (FAICAR) in the absence of folates.</text>
</comment>
<comment type="catalytic activity">
    <reaction evidence="2">
        <text>5-amino-1-(5-phospho-beta-D-ribosyl)imidazole-4-carboxamide + formate + ATP = 5-formamido-1-(5-phospho-D-ribosyl)imidazole-4-carboxamide + ADP + phosphate</text>
        <dbReference type="Rhea" id="RHEA:24836"/>
        <dbReference type="ChEBI" id="CHEBI:15740"/>
        <dbReference type="ChEBI" id="CHEBI:30616"/>
        <dbReference type="ChEBI" id="CHEBI:43474"/>
        <dbReference type="ChEBI" id="CHEBI:58467"/>
        <dbReference type="ChEBI" id="CHEBI:58475"/>
        <dbReference type="ChEBI" id="CHEBI:456216"/>
        <dbReference type="EC" id="6.3.4.23"/>
    </reaction>
</comment>
<comment type="cofactor">
    <cofactor evidence="1">
        <name>Mg(2+)</name>
        <dbReference type="ChEBI" id="CHEBI:18420"/>
    </cofactor>
    <cofactor evidence="1">
        <name>Mn(2+)</name>
        <dbReference type="ChEBI" id="CHEBI:29035"/>
    </cofactor>
    <text evidence="1">Binds 1 Mg(2+) or Mn(2+) ion per subunit.</text>
</comment>
<comment type="pathway">
    <text evidence="2">Purine metabolism; IMP biosynthesis via de novo pathway; 5-formamido-1-(5-phospho-D-ribosyl)imidazole-4-carboxamide from 5-amino-1-(5-phospho-D-ribosyl)imidazole-4-carboxamide (formate route): step 1/1.</text>
</comment>
<comment type="similarity">
    <text evidence="2">Belongs to the phosphohexose mutase family.</text>
</comment>
<comment type="sequence caution" evidence="3">
    <conflict type="erroneous initiation">
        <sequence resource="EMBL-CDS" id="AAB85690"/>
    </conflict>
</comment>
<reference key="1">
    <citation type="journal article" date="1997" name="J. Bacteriol.">
        <title>Complete genome sequence of Methanobacterium thermoautotrophicum deltaH: functional analysis and comparative genomics.</title>
        <authorList>
            <person name="Smith D.R."/>
            <person name="Doucette-Stamm L.A."/>
            <person name="Deloughery C."/>
            <person name="Lee H.-M."/>
            <person name="Dubois J."/>
            <person name="Aldredge T."/>
            <person name="Bashirzadeh R."/>
            <person name="Blakely D."/>
            <person name="Cook R."/>
            <person name="Gilbert K."/>
            <person name="Harrison D."/>
            <person name="Hoang L."/>
            <person name="Keagle P."/>
            <person name="Lumm W."/>
            <person name="Pothier B."/>
            <person name="Qiu D."/>
            <person name="Spadafora R."/>
            <person name="Vicare R."/>
            <person name="Wang Y."/>
            <person name="Wierzbowski J."/>
            <person name="Gibson R."/>
            <person name="Jiwani N."/>
            <person name="Caruso A."/>
            <person name="Bush D."/>
            <person name="Safer H."/>
            <person name="Patwell D."/>
            <person name="Prabhakar S."/>
            <person name="McDougall S."/>
            <person name="Shimer G."/>
            <person name="Goyal A."/>
            <person name="Pietrovski S."/>
            <person name="Church G.M."/>
            <person name="Daniels C.J."/>
            <person name="Mao J.-I."/>
            <person name="Rice P."/>
            <person name="Noelling J."/>
            <person name="Reeve J.N."/>
        </authorList>
    </citation>
    <scope>NUCLEOTIDE SEQUENCE [LARGE SCALE GENOMIC DNA]</scope>
    <source>
        <strain>ATCC 29096 / DSM 1053 / JCM 10044 / NBRC 100330 / Delta H</strain>
    </source>
</reference>
<proteinExistence type="inferred from homology"/>
<protein>
    <recommendedName>
        <fullName evidence="2">5-formaminoimidazole-4-carboxamide-1-(beta)-D-ribofuranosyl 5'-monophosphate synthetase</fullName>
        <ecNumber evidence="2">6.3.4.23</ecNumber>
    </recommendedName>
    <alternativeName>
        <fullName evidence="2">5-aminoimidazole-4-carboxamide-1-beta-D-ribofuranosyl 5'-monophosphate--formate ligase</fullName>
    </alternativeName>
</protein>
<sequence length="363" mass="41253">MSKVNRDEILDILEGYSREDITVATLGSHTSLHILNGAKQEGFKTAVVCEKGREVPYQRFRVADEFIMVDKFSDIVNDDVQDELRSMNSIIVPHGSFVAYAGLDHIENDFYVPMFGNRDILRWESERDLERKLMEEAGIRIPFKYTDPEEIDRTVMVKFPGARGGRGYFVASSTEEFNEKIDSMLERGWITEDDVKDAHIEEYIAGTNFCIHYFYSIMNDEVELMGMDSRFESNIDGLVRIPARDQLDINLDPSYVITGNHPVAMRESLLPQAFDMGDRMVEAASKIVPPGMNGPFCLQTMCTDNLEIVTFEMSARTDGGTNTFMHGSTYSYLLHGEGMSMGRRVAREIRVAAEQDRLPEIIT</sequence>